<proteinExistence type="inferred from homology"/>
<feature type="chain" id="PRO_0000226306" description="Exodeoxyribonuclease 7 large subunit">
    <location>
        <begin position="1"/>
        <end position="442"/>
    </location>
</feature>
<feature type="region of interest" description="Disordered" evidence="2">
    <location>
        <begin position="1"/>
        <end position="38"/>
    </location>
</feature>
<feature type="compositionally biased region" description="Basic residues" evidence="2">
    <location>
        <begin position="22"/>
        <end position="33"/>
    </location>
</feature>
<comment type="function">
    <text evidence="1">Bidirectionally degrades single-stranded DNA into large acid-insoluble oligonucleotides, which are then degraded further into small acid-soluble oligonucleotides.</text>
</comment>
<comment type="catalytic activity">
    <reaction evidence="1">
        <text>Exonucleolytic cleavage in either 5'- to 3'- or 3'- to 5'-direction to yield nucleoside 5'-phosphates.</text>
        <dbReference type="EC" id="3.1.11.6"/>
    </reaction>
</comment>
<comment type="subunit">
    <text evidence="1">Heterooligomer composed of large and small subunits.</text>
</comment>
<comment type="subcellular location">
    <subcellularLocation>
        <location evidence="1">Cytoplasm</location>
    </subcellularLocation>
</comment>
<comment type="similarity">
    <text evidence="1">Belongs to the XseA family.</text>
</comment>
<name>EX7L_RHOBA</name>
<evidence type="ECO:0000255" key="1">
    <source>
        <dbReference type="HAMAP-Rule" id="MF_00378"/>
    </source>
</evidence>
<evidence type="ECO:0000256" key="2">
    <source>
        <dbReference type="SAM" id="MobiDB-lite"/>
    </source>
</evidence>
<organism>
    <name type="scientific">Rhodopirellula baltica (strain DSM 10527 / NCIMB 13988 / SH1)</name>
    <dbReference type="NCBI Taxonomy" id="243090"/>
    <lineage>
        <taxon>Bacteria</taxon>
        <taxon>Pseudomonadati</taxon>
        <taxon>Planctomycetota</taxon>
        <taxon>Planctomycetia</taxon>
        <taxon>Pirellulales</taxon>
        <taxon>Pirellulaceae</taxon>
        <taxon>Rhodopirellula</taxon>
    </lineage>
</organism>
<dbReference type="EC" id="3.1.11.6" evidence="1"/>
<dbReference type="EMBL" id="BX294139">
    <property type="protein sequence ID" value="CAD73285.1"/>
    <property type="molecule type" value="Genomic_DNA"/>
</dbReference>
<dbReference type="RefSeq" id="NP_865601.1">
    <property type="nucleotide sequence ID" value="NC_005027.1"/>
</dbReference>
<dbReference type="RefSeq" id="WP_011119437.1">
    <property type="nucleotide sequence ID" value="NC_005027.1"/>
</dbReference>
<dbReference type="SMR" id="Q7UTZ9"/>
<dbReference type="FunCoup" id="Q7UTZ9">
    <property type="interactions" value="258"/>
</dbReference>
<dbReference type="STRING" id="243090.RB3598"/>
<dbReference type="EnsemblBacteria" id="CAD73285">
    <property type="protein sequence ID" value="CAD73285"/>
    <property type="gene ID" value="RB3598"/>
</dbReference>
<dbReference type="KEGG" id="rba:RB3598"/>
<dbReference type="PATRIC" id="fig|243090.15.peg.1668"/>
<dbReference type="eggNOG" id="COG1570">
    <property type="taxonomic scope" value="Bacteria"/>
</dbReference>
<dbReference type="HOGENOM" id="CLU_023625_3_1_0"/>
<dbReference type="InParanoid" id="Q7UTZ9"/>
<dbReference type="OrthoDB" id="9802795at2"/>
<dbReference type="Proteomes" id="UP000001025">
    <property type="component" value="Chromosome"/>
</dbReference>
<dbReference type="GO" id="GO:0005737">
    <property type="term" value="C:cytoplasm"/>
    <property type="evidence" value="ECO:0007669"/>
    <property type="project" value="UniProtKB-SubCell"/>
</dbReference>
<dbReference type="GO" id="GO:0009318">
    <property type="term" value="C:exodeoxyribonuclease VII complex"/>
    <property type="evidence" value="ECO:0007669"/>
    <property type="project" value="InterPro"/>
</dbReference>
<dbReference type="GO" id="GO:0008855">
    <property type="term" value="F:exodeoxyribonuclease VII activity"/>
    <property type="evidence" value="ECO:0007669"/>
    <property type="project" value="UniProtKB-UniRule"/>
</dbReference>
<dbReference type="GO" id="GO:0003676">
    <property type="term" value="F:nucleic acid binding"/>
    <property type="evidence" value="ECO:0007669"/>
    <property type="project" value="InterPro"/>
</dbReference>
<dbReference type="GO" id="GO:0006308">
    <property type="term" value="P:DNA catabolic process"/>
    <property type="evidence" value="ECO:0007669"/>
    <property type="project" value="UniProtKB-UniRule"/>
</dbReference>
<dbReference type="CDD" id="cd04489">
    <property type="entry name" value="ExoVII_LU_OBF"/>
    <property type="match status" value="1"/>
</dbReference>
<dbReference type="HAMAP" id="MF_00378">
    <property type="entry name" value="Exonuc_7_L"/>
    <property type="match status" value="1"/>
</dbReference>
<dbReference type="InterPro" id="IPR003753">
    <property type="entry name" value="Exonuc_VII_L"/>
</dbReference>
<dbReference type="InterPro" id="IPR020579">
    <property type="entry name" value="Exonuc_VII_lsu_C"/>
</dbReference>
<dbReference type="InterPro" id="IPR025824">
    <property type="entry name" value="OB-fold_nuc-bd_dom"/>
</dbReference>
<dbReference type="NCBIfam" id="TIGR00237">
    <property type="entry name" value="xseA"/>
    <property type="match status" value="1"/>
</dbReference>
<dbReference type="PANTHER" id="PTHR30008">
    <property type="entry name" value="EXODEOXYRIBONUCLEASE 7 LARGE SUBUNIT"/>
    <property type="match status" value="1"/>
</dbReference>
<dbReference type="PANTHER" id="PTHR30008:SF0">
    <property type="entry name" value="EXODEOXYRIBONUCLEASE 7 LARGE SUBUNIT"/>
    <property type="match status" value="1"/>
</dbReference>
<dbReference type="Pfam" id="PF02601">
    <property type="entry name" value="Exonuc_VII_L"/>
    <property type="match status" value="2"/>
</dbReference>
<dbReference type="Pfam" id="PF13742">
    <property type="entry name" value="tRNA_anti_2"/>
    <property type="match status" value="1"/>
</dbReference>
<accession>Q7UTZ9</accession>
<protein>
    <recommendedName>
        <fullName evidence="1">Exodeoxyribonuclease 7 large subunit</fullName>
        <ecNumber evidence="1">3.1.11.6</ecNumber>
    </recommendedName>
    <alternativeName>
        <fullName evidence="1">Exodeoxyribonuclease VII large subunit</fullName>
        <shortName evidence="1">Exonuclease VII large subunit</shortName>
    </alternativeName>
</protein>
<reference key="1">
    <citation type="journal article" date="2003" name="Proc. Natl. Acad. Sci. U.S.A.">
        <title>Complete genome sequence of the marine planctomycete Pirellula sp. strain 1.</title>
        <authorList>
            <person name="Gloeckner F.O."/>
            <person name="Kube M."/>
            <person name="Bauer M."/>
            <person name="Teeling H."/>
            <person name="Lombardot T."/>
            <person name="Ludwig W."/>
            <person name="Gade D."/>
            <person name="Beck A."/>
            <person name="Borzym K."/>
            <person name="Heitmann K."/>
            <person name="Rabus R."/>
            <person name="Schlesner H."/>
            <person name="Amann R."/>
            <person name="Reinhardt R."/>
        </authorList>
    </citation>
    <scope>NUCLEOTIDE SEQUENCE [LARGE SCALE GENOMIC DNA]</scope>
    <source>
        <strain>DSM 10527 / NCIMB 13988 / SH1</strain>
    </source>
</reference>
<sequence>MSDSTQFSLFDSGDDEPAKVTAPKRKVARKKRSSSSSDDAISISELTRQIKSTVESGFPGVWVAGEITDIARPRSGHLYFTLKDERSQIRGVMWRSVAERLPFELDDGQSVLCMGDVEVYAARGSYQLVVRKCQPQGMGALQLAFAQLQAKLQAEGLFEPERKRLLPRVPRRVAIVTSPTGAAIQDFLQAAAQRHAGIEIVLIPASVQGPGSVESLIDGMRAAHRMRPQPDVLIVSRGGGSLEDLWSFNDEQLVRAIAASRIPTVSAVGHEIDVTLADLVADVRALTPTDAASRVLPDRDSMVAALDALGQMMATNLFRRVHSERQRLENWESRPVFQNPFEMVHDRSREVDDWDERGRSAIWRRLEQAQAKLATVAAAQSALSPLAVLARGYSVTQTDAGKVVRSTGDVQPGDSLRTRLTDGDVISVVSRHESKPGNSDSA</sequence>
<keyword id="KW-0963">Cytoplasm</keyword>
<keyword id="KW-0269">Exonuclease</keyword>
<keyword id="KW-0378">Hydrolase</keyword>
<keyword id="KW-0540">Nuclease</keyword>
<keyword id="KW-1185">Reference proteome</keyword>
<gene>
    <name evidence="1" type="primary">xseA</name>
    <name type="ordered locus">RB3598</name>
</gene>